<keyword id="KW-0963">Cytoplasm</keyword>
<keyword id="KW-0378">Hydrolase</keyword>
<keyword id="KW-1185">Reference proteome</keyword>
<name>URE3_PSEAE</name>
<organism>
    <name type="scientific">Pseudomonas aeruginosa (strain ATCC 15692 / DSM 22644 / CIP 104116 / JCM 14847 / LMG 12228 / 1C / PRS 101 / PAO1)</name>
    <dbReference type="NCBI Taxonomy" id="208964"/>
    <lineage>
        <taxon>Bacteria</taxon>
        <taxon>Pseudomonadati</taxon>
        <taxon>Pseudomonadota</taxon>
        <taxon>Gammaproteobacteria</taxon>
        <taxon>Pseudomonadales</taxon>
        <taxon>Pseudomonadaceae</taxon>
        <taxon>Pseudomonas</taxon>
    </lineage>
</organism>
<gene>
    <name evidence="1" type="primary">ureA</name>
    <name type="ordered locus">PA4865</name>
</gene>
<comment type="catalytic activity">
    <reaction evidence="1">
        <text>urea + 2 H2O + H(+) = hydrogencarbonate + 2 NH4(+)</text>
        <dbReference type="Rhea" id="RHEA:20557"/>
        <dbReference type="ChEBI" id="CHEBI:15377"/>
        <dbReference type="ChEBI" id="CHEBI:15378"/>
        <dbReference type="ChEBI" id="CHEBI:16199"/>
        <dbReference type="ChEBI" id="CHEBI:17544"/>
        <dbReference type="ChEBI" id="CHEBI:28938"/>
        <dbReference type="EC" id="3.5.1.5"/>
    </reaction>
</comment>
<comment type="pathway">
    <text evidence="1">Nitrogen metabolism; urea degradation; CO(2) and NH(3) from urea (urease route): step 1/1.</text>
</comment>
<comment type="subunit">
    <text evidence="1">Heterotrimer of UreA (gamma), UreB (beta) and UreC (alpha) subunits. Three heterotrimers associate to form the active enzyme.</text>
</comment>
<comment type="subcellular location">
    <subcellularLocation>
        <location evidence="1">Cytoplasm</location>
    </subcellularLocation>
</comment>
<comment type="similarity">
    <text evidence="1">Belongs to the urease gamma subunit family.</text>
</comment>
<feature type="chain" id="PRO_0000098028" description="Urease subunit gamma">
    <location>
        <begin position="1"/>
        <end position="100"/>
    </location>
</feature>
<evidence type="ECO:0000255" key="1">
    <source>
        <dbReference type="HAMAP-Rule" id="MF_00739"/>
    </source>
</evidence>
<proteinExistence type="inferred from homology"/>
<sequence>MDLSPREKDKLLIFTAGLLAERRLARGLKLNYPEAVALISAALLEGARDGRSVAELMHYGTTLLNREQVMEGVPEMIPDIQVEATFPDGTKLVTVHQPIA</sequence>
<protein>
    <recommendedName>
        <fullName evidence="1">Urease subunit gamma</fullName>
        <ecNumber evidence="1">3.5.1.5</ecNumber>
    </recommendedName>
    <alternativeName>
        <fullName evidence="1">Urea amidohydrolase subunit gamma</fullName>
    </alternativeName>
</protein>
<reference key="1">
    <citation type="journal article" date="2000" name="Nature">
        <title>Complete genome sequence of Pseudomonas aeruginosa PAO1, an opportunistic pathogen.</title>
        <authorList>
            <person name="Stover C.K."/>
            <person name="Pham X.-Q.T."/>
            <person name="Erwin A.L."/>
            <person name="Mizoguchi S.D."/>
            <person name="Warrener P."/>
            <person name="Hickey M.J."/>
            <person name="Brinkman F.S.L."/>
            <person name="Hufnagle W.O."/>
            <person name="Kowalik D.J."/>
            <person name="Lagrou M."/>
            <person name="Garber R.L."/>
            <person name="Goltry L."/>
            <person name="Tolentino E."/>
            <person name="Westbrock-Wadman S."/>
            <person name="Yuan Y."/>
            <person name="Brody L.L."/>
            <person name="Coulter S.N."/>
            <person name="Folger K.R."/>
            <person name="Kas A."/>
            <person name="Larbig K."/>
            <person name="Lim R.M."/>
            <person name="Smith K.A."/>
            <person name="Spencer D.H."/>
            <person name="Wong G.K.-S."/>
            <person name="Wu Z."/>
            <person name="Paulsen I.T."/>
            <person name="Reizer J."/>
            <person name="Saier M.H. Jr."/>
            <person name="Hancock R.E.W."/>
            <person name="Lory S."/>
            <person name="Olson M.V."/>
        </authorList>
    </citation>
    <scope>NUCLEOTIDE SEQUENCE [LARGE SCALE GENOMIC DNA]</scope>
    <source>
        <strain>ATCC 15692 / DSM 22644 / CIP 104116 / JCM 14847 / LMG 12228 / 1C / PRS 101 / PAO1</strain>
    </source>
</reference>
<dbReference type="EC" id="3.5.1.5" evidence="1"/>
<dbReference type="EMBL" id="AE004091">
    <property type="protein sequence ID" value="AAG08250.1"/>
    <property type="molecule type" value="Genomic_DNA"/>
</dbReference>
<dbReference type="PIR" id="E83037">
    <property type="entry name" value="E83037"/>
</dbReference>
<dbReference type="RefSeq" id="NP_253552.1">
    <property type="nucleotide sequence ID" value="NC_002516.2"/>
</dbReference>
<dbReference type="RefSeq" id="WP_003099389.1">
    <property type="nucleotide sequence ID" value="NZ_QZGE01000002.1"/>
</dbReference>
<dbReference type="SMR" id="Q9HUU8"/>
<dbReference type="STRING" id="208964.PA4865"/>
<dbReference type="PaxDb" id="208964-PA4865"/>
<dbReference type="DNASU" id="882210"/>
<dbReference type="GeneID" id="882210"/>
<dbReference type="KEGG" id="pae:PA4865"/>
<dbReference type="PATRIC" id="fig|208964.12.peg.5098"/>
<dbReference type="PseudoCAP" id="PA4865"/>
<dbReference type="HOGENOM" id="CLU_145825_1_0_6"/>
<dbReference type="InParanoid" id="Q9HUU8"/>
<dbReference type="OrthoDB" id="9797217at2"/>
<dbReference type="PhylomeDB" id="Q9HUU8"/>
<dbReference type="BioCyc" id="PAER208964:G1FZ6-4979-MONOMER"/>
<dbReference type="UniPathway" id="UPA00258">
    <property type="reaction ID" value="UER00370"/>
</dbReference>
<dbReference type="Proteomes" id="UP000002438">
    <property type="component" value="Chromosome"/>
</dbReference>
<dbReference type="GO" id="GO:0005737">
    <property type="term" value="C:cytoplasm"/>
    <property type="evidence" value="ECO:0007669"/>
    <property type="project" value="UniProtKB-SubCell"/>
</dbReference>
<dbReference type="GO" id="GO:0016151">
    <property type="term" value="F:nickel cation binding"/>
    <property type="evidence" value="ECO:0007669"/>
    <property type="project" value="InterPro"/>
</dbReference>
<dbReference type="GO" id="GO:0009039">
    <property type="term" value="F:urease activity"/>
    <property type="evidence" value="ECO:0007669"/>
    <property type="project" value="UniProtKB-UniRule"/>
</dbReference>
<dbReference type="GO" id="GO:0043419">
    <property type="term" value="P:urea catabolic process"/>
    <property type="evidence" value="ECO:0007669"/>
    <property type="project" value="UniProtKB-UniRule"/>
</dbReference>
<dbReference type="CDD" id="cd00390">
    <property type="entry name" value="Urease_gamma"/>
    <property type="match status" value="1"/>
</dbReference>
<dbReference type="Gene3D" id="3.30.280.10">
    <property type="entry name" value="Urease, gamma-like subunit"/>
    <property type="match status" value="1"/>
</dbReference>
<dbReference type="HAMAP" id="MF_00739">
    <property type="entry name" value="Urease_gamma"/>
    <property type="match status" value="1"/>
</dbReference>
<dbReference type="InterPro" id="IPR012010">
    <property type="entry name" value="Urease_gamma"/>
</dbReference>
<dbReference type="InterPro" id="IPR002026">
    <property type="entry name" value="Urease_gamma/gamma-beta_su"/>
</dbReference>
<dbReference type="InterPro" id="IPR036463">
    <property type="entry name" value="Urease_gamma_sf"/>
</dbReference>
<dbReference type="InterPro" id="IPR050069">
    <property type="entry name" value="Urease_subunit"/>
</dbReference>
<dbReference type="NCBIfam" id="NF009712">
    <property type="entry name" value="PRK13241.1"/>
    <property type="match status" value="1"/>
</dbReference>
<dbReference type="NCBIfam" id="TIGR00193">
    <property type="entry name" value="urease_gam"/>
    <property type="match status" value="1"/>
</dbReference>
<dbReference type="PANTHER" id="PTHR33569">
    <property type="entry name" value="UREASE"/>
    <property type="match status" value="1"/>
</dbReference>
<dbReference type="PANTHER" id="PTHR33569:SF1">
    <property type="entry name" value="UREASE"/>
    <property type="match status" value="1"/>
</dbReference>
<dbReference type="Pfam" id="PF00547">
    <property type="entry name" value="Urease_gamma"/>
    <property type="match status" value="1"/>
</dbReference>
<dbReference type="PIRSF" id="PIRSF001223">
    <property type="entry name" value="Urease_gamma"/>
    <property type="match status" value="1"/>
</dbReference>
<dbReference type="SUPFAM" id="SSF54111">
    <property type="entry name" value="Urease, gamma-subunit"/>
    <property type="match status" value="1"/>
</dbReference>
<accession>Q9HUU8</accession>